<gene>
    <name type="primary">MEIOB</name>
    <name type="ORF">QtsA-12515</name>
</gene>
<organism>
    <name type="scientific">Macaca fascicularis</name>
    <name type="common">Crab-eating macaque</name>
    <name type="synonym">Cynomolgus monkey</name>
    <dbReference type="NCBI Taxonomy" id="9541"/>
    <lineage>
        <taxon>Eukaryota</taxon>
        <taxon>Metazoa</taxon>
        <taxon>Chordata</taxon>
        <taxon>Craniata</taxon>
        <taxon>Vertebrata</taxon>
        <taxon>Euteleostomi</taxon>
        <taxon>Mammalia</taxon>
        <taxon>Eutheria</taxon>
        <taxon>Euarchontoglires</taxon>
        <taxon>Primates</taxon>
        <taxon>Haplorrhini</taxon>
        <taxon>Catarrhini</taxon>
        <taxon>Cercopithecidae</taxon>
        <taxon>Cercopithecinae</taxon>
        <taxon>Macaca</taxon>
    </lineage>
</organism>
<accession>Q4R8G6</accession>
<evidence type="ECO:0000250" key="1">
    <source>
        <dbReference type="UniProtKB" id="Q8N635"/>
    </source>
</evidence>
<evidence type="ECO:0000250" key="2">
    <source>
        <dbReference type="UniProtKB" id="Q9D513"/>
    </source>
</evidence>
<evidence type="ECO:0000305" key="3"/>
<proteinExistence type="evidence at transcript level"/>
<comment type="function">
    <text evidence="2">Single-stranded DNA-binding protein required for homologous recombination in meiosis I. Required for double strand breaks (DSBs) repair and crossover formation and promotion of faithful and complete synapsis. Not required for the initial loading of recombinases but required to maintain a proper number of RAD51 and DMC1 foci after the zygotene stage. May act by ensuring the stabilization of recombinases, which is required for successful homology search and meiotic recombination. Displays Single-stranded DNA 3'-5' exonuclease activity in vitro.</text>
</comment>
<comment type="subunit">
    <text evidence="1 2">Component of a multiprotein complex with RPA2 and SPATA22. Interacts with SPATA22 (By similarity). Interacts with the complex BRME1:HSF2BP:BRCA2.</text>
</comment>
<comment type="subcellular location">
    <subcellularLocation>
        <location evidence="2">Cytoplasm</location>
    </subcellularLocation>
    <subcellularLocation>
        <location evidence="2">Nucleus</location>
    </subcellularLocation>
    <subcellularLocation>
        <location evidence="2">Chromosome</location>
    </subcellularLocation>
    <text evidence="2">Co-localizes with the RPA complex on meiotic chromosome axes. Accumulates on resected DNA. Localization is dependent on SPATA22.</text>
</comment>
<comment type="similarity">
    <text evidence="3">Belongs to the MEIOB family.</text>
</comment>
<sequence>MANSFATRTFTTLSDLQPNMANLKVIGVVIGKTDVKGFPDRKNIGSERYTFSFTIRDSPAHFVNAASWGNEDYIKSLSDSFRVGDCVIIENPLIQRKEIEREEKFSPATPSNCKLLLSENHSTVKVCSSYEVDTKLLSLIHLPVKESHDYYSLGDIVANGHSLNGRIINVLAAVKSVGEPKYFTTSDRRKGQRCEVRLYDETEFSFAMTCWDNESILLAQSWMPRETVIFVSDVRISFDKFRNCMTATVISKTIITTNPETPEANILLNFIRENKETNVLDDEIESYFKESINLSTIVDVYTVEQLKGKALKNEGKADPSYGILYAYISTLNIDDETTKVVRNRCSTCGYIVNEASNMCTICNKNSLDFKSVFLSFDMLIDLTDHTGTLHSCSLTGSVAEETLGCTVNEFLAMTDEQKTALKWQFLLERSKIYLKFVVSHRARSGLKISVLSCKLADPTEASRNLSGQTRV</sequence>
<feature type="chain" id="PRO_0000337135" description="Meiosis-specific with OB domain-containing protein">
    <location>
        <begin position="1"/>
        <end position="471"/>
    </location>
</feature>
<feature type="DNA-binding region" description="OB">
    <location>
        <begin position="167"/>
        <end position="272"/>
    </location>
</feature>
<reference key="1">
    <citation type="submission" date="2005-06" db="EMBL/GenBank/DDBJ databases">
        <title>DNA sequences of macaque genes expressed in brain or testis and its evolutionary implications.</title>
        <authorList>
            <consortium name="International consortium for macaque cDNA sequencing and analysis"/>
        </authorList>
    </citation>
    <scope>NUCLEOTIDE SEQUENCE [LARGE SCALE MRNA]</scope>
    <source>
        <tissue>Testis</tissue>
    </source>
</reference>
<dbReference type="EC" id="3.1.-.-"/>
<dbReference type="EMBL" id="AB168486">
    <property type="protein sequence ID" value="BAE00606.1"/>
    <property type="molecule type" value="mRNA"/>
</dbReference>
<dbReference type="RefSeq" id="NP_001271876.1">
    <property type="nucleotide sequence ID" value="NM_001284947.1"/>
</dbReference>
<dbReference type="SMR" id="Q4R8G6"/>
<dbReference type="STRING" id="9541.ENSMFAP00000046058"/>
<dbReference type="eggNOG" id="KOG0851">
    <property type="taxonomic scope" value="Eukaryota"/>
</dbReference>
<dbReference type="Proteomes" id="UP000233100">
    <property type="component" value="Unplaced"/>
</dbReference>
<dbReference type="GO" id="GO:0005694">
    <property type="term" value="C:chromosome"/>
    <property type="evidence" value="ECO:0007669"/>
    <property type="project" value="UniProtKB-SubCell"/>
</dbReference>
<dbReference type="GO" id="GO:0005737">
    <property type="term" value="C:cytoplasm"/>
    <property type="evidence" value="ECO:0000250"/>
    <property type="project" value="UniProtKB"/>
</dbReference>
<dbReference type="GO" id="GO:0005634">
    <property type="term" value="C:nucleus"/>
    <property type="evidence" value="ECO:0000250"/>
    <property type="project" value="UniProtKB"/>
</dbReference>
<dbReference type="GO" id="GO:0003682">
    <property type="term" value="F:chromatin binding"/>
    <property type="evidence" value="ECO:0000250"/>
    <property type="project" value="UniProtKB"/>
</dbReference>
<dbReference type="GO" id="GO:0008310">
    <property type="term" value="F:single-stranded DNA 3'-5' DNA exonuclease activity"/>
    <property type="evidence" value="ECO:0000250"/>
    <property type="project" value="UniProtKB"/>
</dbReference>
<dbReference type="GO" id="GO:0003697">
    <property type="term" value="F:single-stranded DNA binding"/>
    <property type="evidence" value="ECO:0000250"/>
    <property type="project" value="UniProtKB"/>
</dbReference>
<dbReference type="GO" id="GO:0000724">
    <property type="term" value="P:double-strand break repair via homologous recombination"/>
    <property type="evidence" value="ECO:0000250"/>
    <property type="project" value="UniProtKB"/>
</dbReference>
<dbReference type="GO" id="GO:0007144">
    <property type="term" value="P:female meiosis I"/>
    <property type="evidence" value="ECO:0000250"/>
    <property type="project" value="UniProtKB"/>
</dbReference>
<dbReference type="GO" id="GO:0009566">
    <property type="term" value="P:fertilization"/>
    <property type="evidence" value="ECO:0000250"/>
    <property type="project" value="UniProtKB"/>
</dbReference>
<dbReference type="GO" id="GO:0007129">
    <property type="term" value="P:homologous chromosome pairing at meiosis"/>
    <property type="evidence" value="ECO:0000250"/>
    <property type="project" value="UniProtKB"/>
</dbReference>
<dbReference type="GO" id="GO:0007140">
    <property type="term" value="P:male meiotic nuclear division"/>
    <property type="evidence" value="ECO:0000250"/>
    <property type="project" value="UniProtKB"/>
</dbReference>
<dbReference type="GO" id="GO:0000712">
    <property type="term" value="P:resolution of meiotic recombination intermediates"/>
    <property type="evidence" value="ECO:0000250"/>
    <property type="project" value="UniProtKB"/>
</dbReference>
<dbReference type="CDD" id="cd04475">
    <property type="entry name" value="RPA1_DBD_B"/>
    <property type="match status" value="1"/>
</dbReference>
<dbReference type="FunFam" id="2.40.50.140:FF:000239">
    <property type="entry name" value="Meiosis specific with OB domains"/>
    <property type="match status" value="1"/>
</dbReference>
<dbReference type="FunFam" id="2.40.50.140:FF:000248">
    <property type="entry name" value="Meiosis specific with OB domains"/>
    <property type="match status" value="1"/>
</dbReference>
<dbReference type="FunFam" id="2.40.50.140:FF:000171">
    <property type="entry name" value="meiosis-specific with OB domain-containing protein isoform X1"/>
    <property type="match status" value="1"/>
</dbReference>
<dbReference type="Gene3D" id="2.40.50.140">
    <property type="entry name" value="Nucleic acid-binding proteins"/>
    <property type="match status" value="3"/>
</dbReference>
<dbReference type="InterPro" id="IPR052469">
    <property type="entry name" value="MEIOB"/>
</dbReference>
<dbReference type="InterPro" id="IPR012340">
    <property type="entry name" value="NA-bd_OB-fold"/>
</dbReference>
<dbReference type="InterPro" id="IPR056880">
    <property type="entry name" value="OB_MEIOB_N"/>
</dbReference>
<dbReference type="InterPro" id="IPR031657">
    <property type="entry name" value="REPA_OB_2"/>
</dbReference>
<dbReference type="PANTHER" id="PTHR21166">
    <property type="entry name" value="CELL DIVISION CONTROL PROTEIN 24 OB DOMAIN-CONTAINING PROTEIN-RELATED"/>
    <property type="match status" value="1"/>
</dbReference>
<dbReference type="PANTHER" id="PTHR21166:SF2">
    <property type="entry name" value="CELL DIVISION CONTROL PROTEIN 24 OB DOMAIN-CONTAINING PROTEIN-RELATED"/>
    <property type="match status" value="1"/>
</dbReference>
<dbReference type="Pfam" id="PF24903">
    <property type="entry name" value="OB_MEIOB_N"/>
    <property type="match status" value="1"/>
</dbReference>
<dbReference type="Pfam" id="PF16900">
    <property type="entry name" value="REPA_OB_2"/>
    <property type="match status" value="1"/>
</dbReference>
<dbReference type="SUPFAM" id="SSF50249">
    <property type="entry name" value="Nucleic acid-binding proteins"/>
    <property type="match status" value="3"/>
</dbReference>
<name>MEIOB_MACFA</name>
<keyword id="KW-0158">Chromosome</keyword>
<keyword id="KW-0963">Cytoplasm</keyword>
<keyword id="KW-0238">DNA-binding</keyword>
<keyword id="KW-0269">Exonuclease</keyword>
<keyword id="KW-0378">Hydrolase</keyword>
<keyword id="KW-0469">Meiosis</keyword>
<keyword id="KW-0540">Nuclease</keyword>
<keyword id="KW-0539">Nucleus</keyword>
<keyword id="KW-1185">Reference proteome</keyword>
<protein>
    <recommendedName>
        <fullName>Meiosis-specific with OB domain-containing protein</fullName>
        <ecNumber>3.1.-.-</ecNumber>
    </recommendedName>
</protein>